<comment type="function">
    <text evidence="4 5">Required for cilia biogenesis and maintenance in the kidney, the lateral line organ and eye. Appears to function within the multiple intraflagellar transport complex B (IFT-B).</text>
</comment>
<comment type="subcellular location">
    <subcellularLocation>
        <location evidence="1">Nucleus</location>
    </subcellularLocation>
    <subcellularLocation>
        <location evidence="9">Cell projection</location>
        <location evidence="9">Cilium</location>
    </subcellularLocation>
</comment>
<comment type="developmental stage">
    <text evidence="5">Expressed maternally and ubiquitously throughout the embryo across different developmental stages from early 8-cell stage to 24 hpf.</text>
</comment>
<comment type="disruption phenotype">
    <text evidence="4 5">Mutant animals develop ventrally curved bodies visible at the end of 1 dpf, followed by bilateral kidney cysts in the glomerular-tubular region detectable at 2 dpf. Cilia in the anterior pronephric ducts are already visibly defective at 1 dpf and by 5 dpf, cilia are completely absent from these ducts. On the other hand, cilia from the posterior pronephric ducts remain unaffected. Cilia biogenesis is also defective in the retina, with the outer segments of photoreceptor cells having modified cilia. No visible cilia in the lateral line organ. Pericardial edema is also observed at 5 dpf (PubMed:22102889). Morpholino knockdown in embryos results in laterality defects, a significant reduction or loss of Kupffer's vesicle cilia, and reduction or loss of ptc1 and myod expression (PubMed:19464178). A subset of embryos display shortened body axes and partial or full cyclopia while another subset have severe gastrulation defects (PubMed:19464178).</text>
</comment>
<comment type="similarity">
    <text evidence="8">Belongs to the CLUAP1 family.</text>
</comment>
<comment type="sequence caution" evidence="8">
    <conflict type="miscellaneous discrepancy">
        <sequence resource="EMBL-CDS" id="AAH97072"/>
    </conflict>
    <text>Contaminating sequence. Potential poly-A sequence.</text>
</comment>
<sequence>MSFRDLRNFTEMMRALGYPRLISMENFRSPNFPLVAEILIWLVKRYEPQMEIPSDVDTESDRVFFIKAVAQFMATKAHVKLNLKRLYQADGYAVKEMLKITSILYNAMKTKENAGGDQNNDENSKFKFDLGSKIADLKLARQLGSEITAKGAALFDLLGQEEDLRESRTAAIARPLEITETERAMRAAVKDVTESIQMTKDLLNNVSSDEASLEAKIEKKKQDLERNQKRLQTLQSVRPAFMDEYEKIEEDLEKQYQTYVEKYRNLSFLEQQLDDYHRVEQERFEEAEMAMKMRQNKLKEEEKRLMRSGVARDEDSDVDIPEDEGSDSDIDDGQQARPHHPRHTQISGRGGARFIGSMRGGDSEETEDSEIDVDDDDEDDDEDGEEDEEENEDLDEDNDSLEGSSGKPGRTNQSLHPQILEESDNDF</sequence>
<dbReference type="EMBL" id="BC045921">
    <property type="protein sequence ID" value="AAH45921.1"/>
    <property type="molecule type" value="mRNA"/>
</dbReference>
<dbReference type="EMBL" id="BC067601">
    <property type="protein sequence ID" value="AAH67601.1"/>
    <property type="molecule type" value="mRNA"/>
</dbReference>
<dbReference type="EMBL" id="BC097072">
    <property type="protein sequence ID" value="AAH97072.1"/>
    <property type="status" value="ALT_SEQ"/>
    <property type="molecule type" value="mRNA"/>
</dbReference>
<dbReference type="RefSeq" id="NP_998173.1">
    <property type="nucleotide sequence ID" value="NM_213008.1"/>
</dbReference>
<dbReference type="SMR" id="Q7ZVC2"/>
<dbReference type="FunCoup" id="Q7ZVC2">
    <property type="interactions" value="745"/>
</dbReference>
<dbReference type="STRING" id="7955.ENSDARP00000101015"/>
<dbReference type="PaxDb" id="7955-ENSDARP00000101015"/>
<dbReference type="GeneID" id="406281"/>
<dbReference type="KEGG" id="dre:406281"/>
<dbReference type="AGR" id="ZFIN:ZDB-GENE-040426-1943"/>
<dbReference type="CTD" id="23059"/>
<dbReference type="ZFIN" id="ZDB-GENE-040426-1943">
    <property type="gene designation" value="cluap1"/>
</dbReference>
<dbReference type="eggNOG" id="KOG3647">
    <property type="taxonomic scope" value="Eukaryota"/>
</dbReference>
<dbReference type="InParanoid" id="Q7ZVC2"/>
<dbReference type="OrthoDB" id="438545at2759"/>
<dbReference type="PhylomeDB" id="Q7ZVC2"/>
<dbReference type="PRO" id="PR:Q7ZVC2"/>
<dbReference type="Proteomes" id="UP000000437">
    <property type="component" value="Chromosome 24"/>
</dbReference>
<dbReference type="GO" id="GO:0005929">
    <property type="term" value="C:cilium"/>
    <property type="evidence" value="ECO:0000318"/>
    <property type="project" value="GO_Central"/>
</dbReference>
<dbReference type="GO" id="GO:0030992">
    <property type="term" value="C:intraciliary transport particle B"/>
    <property type="evidence" value="ECO:0000318"/>
    <property type="project" value="GO_Central"/>
</dbReference>
<dbReference type="GO" id="GO:0005815">
    <property type="term" value="C:microtubule organizing center"/>
    <property type="evidence" value="ECO:0000318"/>
    <property type="project" value="GO_Central"/>
</dbReference>
<dbReference type="GO" id="GO:0005634">
    <property type="term" value="C:nucleus"/>
    <property type="evidence" value="ECO:0007669"/>
    <property type="project" value="UniProtKB-SubCell"/>
</dbReference>
<dbReference type="GO" id="GO:0060271">
    <property type="term" value="P:cilium assembly"/>
    <property type="evidence" value="ECO:0000315"/>
    <property type="project" value="ZFIN"/>
</dbReference>
<dbReference type="GO" id="GO:0001822">
    <property type="term" value="P:kidney development"/>
    <property type="evidence" value="ECO:0000315"/>
    <property type="project" value="ZFIN"/>
</dbReference>
<dbReference type="GO" id="GO:0045494">
    <property type="term" value="P:photoreceptor cell maintenance"/>
    <property type="evidence" value="ECO:0000315"/>
    <property type="project" value="ZFIN"/>
</dbReference>
<dbReference type="InterPro" id="IPR019366">
    <property type="entry name" value="Clusterin-associated_protein-1"/>
</dbReference>
<dbReference type="PANTHER" id="PTHR21547">
    <property type="entry name" value="CLUSTERIN ASSOCIATED PROTEIN 1"/>
    <property type="match status" value="1"/>
</dbReference>
<dbReference type="PANTHER" id="PTHR21547:SF0">
    <property type="entry name" value="CLUSTERIN-ASSOCIATED PROTEIN 1"/>
    <property type="match status" value="1"/>
</dbReference>
<dbReference type="Pfam" id="PF10234">
    <property type="entry name" value="Cluap1"/>
    <property type="match status" value="1"/>
</dbReference>
<proteinExistence type="evidence at transcript level"/>
<gene>
    <name type="primary">cluap1</name>
    <name evidence="7" type="ORF">zgc:56115</name>
</gene>
<organism>
    <name type="scientific">Danio rerio</name>
    <name type="common">Zebrafish</name>
    <name type="synonym">Brachydanio rerio</name>
    <dbReference type="NCBI Taxonomy" id="7955"/>
    <lineage>
        <taxon>Eukaryota</taxon>
        <taxon>Metazoa</taxon>
        <taxon>Chordata</taxon>
        <taxon>Craniata</taxon>
        <taxon>Vertebrata</taxon>
        <taxon>Euteleostomi</taxon>
        <taxon>Actinopterygii</taxon>
        <taxon>Neopterygii</taxon>
        <taxon>Teleostei</taxon>
        <taxon>Ostariophysi</taxon>
        <taxon>Cypriniformes</taxon>
        <taxon>Danionidae</taxon>
        <taxon>Danioninae</taxon>
        <taxon>Danio</taxon>
    </lineage>
</organism>
<feature type="chain" id="PRO_0000239455" description="Clusterin-associated protein 1 homolog">
    <location>
        <begin position="1"/>
        <end position="427"/>
    </location>
</feature>
<feature type="region of interest" description="Disordered" evidence="3">
    <location>
        <begin position="300"/>
        <end position="427"/>
    </location>
</feature>
<feature type="coiled-coil region" evidence="2">
    <location>
        <begin position="202"/>
        <end position="307"/>
    </location>
</feature>
<feature type="compositionally biased region" description="Basic and acidic residues" evidence="3">
    <location>
        <begin position="300"/>
        <end position="313"/>
    </location>
</feature>
<feature type="compositionally biased region" description="Acidic residues" evidence="3">
    <location>
        <begin position="314"/>
        <end position="332"/>
    </location>
</feature>
<feature type="compositionally biased region" description="Acidic residues" evidence="3">
    <location>
        <begin position="363"/>
        <end position="400"/>
    </location>
</feature>
<feature type="sequence conflict" description="In Ref. 1; AAH45921." evidence="8" ref="1">
    <original>A</original>
    <variation>V</variation>
    <location>
        <position position="187"/>
    </location>
</feature>
<evidence type="ECO:0000250" key="1">
    <source>
        <dbReference type="UniProtKB" id="Q96AJ1"/>
    </source>
</evidence>
<evidence type="ECO:0000255" key="2"/>
<evidence type="ECO:0000256" key="3">
    <source>
        <dbReference type="SAM" id="MobiDB-lite"/>
    </source>
</evidence>
<evidence type="ECO:0000269" key="4">
    <source>
    </source>
</evidence>
<evidence type="ECO:0000269" key="5">
    <source>
    </source>
</evidence>
<evidence type="ECO:0000303" key="6">
    <source>
    </source>
</evidence>
<evidence type="ECO:0000303" key="7">
    <source ref="1"/>
</evidence>
<evidence type="ECO:0000305" key="8"/>
<evidence type="ECO:0000305" key="9">
    <source>
    </source>
</evidence>
<protein>
    <recommendedName>
        <fullName>Clusterin-associated protein 1 homolog</fullName>
    </recommendedName>
    <alternativeName>
        <fullName evidence="6">Qilin</fullName>
    </alternativeName>
</protein>
<reference key="1">
    <citation type="submission" date="2003-01" db="EMBL/GenBank/DDBJ databases">
        <authorList>
            <consortium name="NIH - Zebrafish Gene Collection (ZGC) project"/>
        </authorList>
    </citation>
    <scope>NUCLEOTIDE SEQUENCE [LARGE SCALE MRNA]</scope>
    <source>
        <strain>SJD</strain>
        <tissue>Kidney</tissue>
        <tissue>Larva</tissue>
    </source>
</reference>
<reference key="2">
    <citation type="journal article" date="2009" name="Curr. Biol.">
        <title>The extracellular domain of Smoothened regulates ciliary localization and is required for high-level Hh signaling.</title>
        <authorList>
            <person name="Aanstad P."/>
            <person name="Santos N."/>
            <person name="Corbit K.C."/>
            <person name="Scherz P.J."/>
            <person name="Trinh L.A."/>
            <person name="Salvenmoser W."/>
            <person name="Huisken J."/>
            <person name="Reiter J.F."/>
            <person name="Stainier D.Y."/>
        </authorList>
    </citation>
    <scope>FUNCTION</scope>
    <scope>DISRUPTION PHENOTYPE</scope>
</reference>
<reference key="3">
    <citation type="journal article" date="2011" name="PLoS ONE">
        <title>Qilin is essential for cilia assembly and normal kidney development in zebrafish.</title>
        <authorList>
            <person name="Li J."/>
            <person name="Sun Z."/>
        </authorList>
    </citation>
    <scope>FUNCTION</scope>
    <scope>DEVELOPMENTAL STAGE</scope>
    <scope>DISRUPTION PHENOTYPE</scope>
</reference>
<accession>Q7ZVC2</accession>
<accession>Q4V941</accession>
<accession>Q6NWG3</accession>
<name>CLUA1_DANRE</name>
<keyword id="KW-0966">Cell projection</keyword>
<keyword id="KW-0969">Cilium</keyword>
<keyword id="KW-0970">Cilium biogenesis/degradation</keyword>
<keyword id="KW-0175">Coiled coil</keyword>
<keyword id="KW-0539">Nucleus</keyword>
<keyword id="KW-1185">Reference proteome</keyword>